<keyword id="KW-0067">ATP-binding</keyword>
<keyword id="KW-0418">Kinase</keyword>
<keyword id="KW-0547">Nucleotide-binding</keyword>
<keyword id="KW-0723">Serine/threonine-protein kinase</keyword>
<keyword id="KW-0808">Transferase</keyword>
<proteinExistence type="inferred from homology"/>
<gene>
    <name evidence="1" type="primary">rsbW</name>
    <name type="ordered locus">SaurJH9_2102</name>
</gene>
<sequence length="159" mass="17921">MQSKEDFIEMRVPASAEYVSLIRLTLSGVFSRAGATYDDIEDAKIAVSEAVTNAVKHAYKENNNVGIINIYFEILEDKIKIVISDKGDSFDYETTKSKIGPYDKDENIDFLREGGLGLFLIESLMDEVTVYKESGVTISMTKYIKKEQVRNNGERVEIS</sequence>
<feature type="chain" id="PRO_1000082673" description="Serine-protein kinase RsbW">
    <location>
        <begin position="1"/>
        <end position="159"/>
    </location>
</feature>
<evidence type="ECO:0000255" key="1">
    <source>
        <dbReference type="HAMAP-Rule" id="MF_00638"/>
    </source>
</evidence>
<comment type="function">
    <text evidence="1">Negative regulator of sigma-B activity. Phosphorylates and inactivates its specific antagonist protein, RsbV. Upon phosphorylation of RsbV, RsbW is released and binds to sigma-B, thereby blocking its ability to form an RNA polymerase holoenzyme (E-sigma-B).</text>
</comment>
<comment type="catalytic activity">
    <reaction evidence="1">
        <text>L-seryl-[protein] + ATP = O-phospho-L-seryl-[protein] + ADP + H(+)</text>
        <dbReference type="Rhea" id="RHEA:17989"/>
        <dbReference type="Rhea" id="RHEA-COMP:9863"/>
        <dbReference type="Rhea" id="RHEA-COMP:11604"/>
        <dbReference type="ChEBI" id="CHEBI:15378"/>
        <dbReference type="ChEBI" id="CHEBI:29999"/>
        <dbReference type="ChEBI" id="CHEBI:30616"/>
        <dbReference type="ChEBI" id="CHEBI:83421"/>
        <dbReference type="ChEBI" id="CHEBI:456216"/>
        <dbReference type="EC" id="2.7.11.1"/>
    </reaction>
</comment>
<comment type="catalytic activity">
    <reaction evidence="1">
        <text>L-threonyl-[protein] + ATP = O-phospho-L-threonyl-[protein] + ADP + H(+)</text>
        <dbReference type="Rhea" id="RHEA:46608"/>
        <dbReference type="Rhea" id="RHEA-COMP:11060"/>
        <dbReference type="Rhea" id="RHEA-COMP:11605"/>
        <dbReference type="ChEBI" id="CHEBI:15378"/>
        <dbReference type="ChEBI" id="CHEBI:30013"/>
        <dbReference type="ChEBI" id="CHEBI:30616"/>
        <dbReference type="ChEBI" id="CHEBI:61977"/>
        <dbReference type="ChEBI" id="CHEBI:456216"/>
        <dbReference type="EC" id="2.7.11.1"/>
    </reaction>
</comment>
<comment type="similarity">
    <text evidence="1">Belongs to the anti-sigma-factor family.</text>
</comment>
<protein>
    <recommendedName>
        <fullName evidence="1">Serine-protein kinase RsbW</fullName>
        <ecNumber evidence="1">2.7.11.1</ecNumber>
    </recommendedName>
    <alternativeName>
        <fullName evidence="1">Anti-sigma-B factor</fullName>
    </alternativeName>
    <alternativeName>
        <fullName evidence="1">Sigma-B negative effector RsbW</fullName>
    </alternativeName>
</protein>
<name>RSBW_STAA9</name>
<reference key="1">
    <citation type="submission" date="2007-05" db="EMBL/GenBank/DDBJ databases">
        <title>Complete sequence of chromosome of Staphylococcus aureus subsp. aureus JH9.</title>
        <authorList>
            <consortium name="US DOE Joint Genome Institute"/>
            <person name="Copeland A."/>
            <person name="Lucas S."/>
            <person name="Lapidus A."/>
            <person name="Barry K."/>
            <person name="Detter J.C."/>
            <person name="Glavina del Rio T."/>
            <person name="Hammon N."/>
            <person name="Israni S."/>
            <person name="Pitluck S."/>
            <person name="Chain P."/>
            <person name="Malfatti S."/>
            <person name="Shin M."/>
            <person name="Vergez L."/>
            <person name="Schmutz J."/>
            <person name="Larimer F."/>
            <person name="Land M."/>
            <person name="Hauser L."/>
            <person name="Kyrpides N."/>
            <person name="Kim E."/>
            <person name="Tomasz A."/>
            <person name="Richardson P."/>
        </authorList>
    </citation>
    <scope>NUCLEOTIDE SEQUENCE [LARGE SCALE GENOMIC DNA]</scope>
    <source>
        <strain>JH9</strain>
    </source>
</reference>
<accession>A5IUL1</accession>
<dbReference type="EC" id="2.7.11.1" evidence="1"/>
<dbReference type="EMBL" id="CP000703">
    <property type="protein sequence ID" value="ABQ49884.1"/>
    <property type="molecule type" value="Genomic_DNA"/>
</dbReference>
<dbReference type="RefSeq" id="WP_001190829.1">
    <property type="nucleotide sequence ID" value="NC_009487.1"/>
</dbReference>
<dbReference type="SMR" id="A5IUL1"/>
<dbReference type="KEGG" id="saj:SaurJH9_2102"/>
<dbReference type="HOGENOM" id="CLU_090336_11_1_9"/>
<dbReference type="GO" id="GO:0005524">
    <property type="term" value="F:ATP binding"/>
    <property type="evidence" value="ECO:0007669"/>
    <property type="project" value="UniProtKB-KW"/>
</dbReference>
<dbReference type="GO" id="GO:0106310">
    <property type="term" value="F:protein serine kinase activity"/>
    <property type="evidence" value="ECO:0007669"/>
    <property type="project" value="RHEA"/>
</dbReference>
<dbReference type="GO" id="GO:0004674">
    <property type="term" value="F:protein serine/threonine kinase activity"/>
    <property type="evidence" value="ECO:0007669"/>
    <property type="project" value="UniProtKB-KW"/>
</dbReference>
<dbReference type="GO" id="GO:0016989">
    <property type="term" value="F:sigma factor antagonist activity"/>
    <property type="evidence" value="ECO:0007669"/>
    <property type="project" value="InterPro"/>
</dbReference>
<dbReference type="CDD" id="cd16936">
    <property type="entry name" value="HATPase_RsbW-like"/>
    <property type="match status" value="1"/>
</dbReference>
<dbReference type="Gene3D" id="3.30.565.10">
    <property type="entry name" value="Histidine kinase-like ATPase, C-terminal domain"/>
    <property type="match status" value="1"/>
</dbReference>
<dbReference type="HAMAP" id="MF_00638">
    <property type="entry name" value="Anti_sigma_B"/>
    <property type="match status" value="1"/>
</dbReference>
<dbReference type="InterPro" id="IPR050267">
    <property type="entry name" value="Anti-sigma-factor_SerPK"/>
</dbReference>
<dbReference type="InterPro" id="IPR036890">
    <property type="entry name" value="HATPase_C_sf"/>
</dbReference>
<dbReference type="InterPro" id="IPR010193">
    <property type="entry name" value="RsbW"/>
</dbReference>
<dbReference type="NCBIfam" id="NF003144">
    <property type="entry name" value="PRK04069.1"/>
    <property type="match status" value="1"/>
</dbReference>
<dbReference type="NCBIfam" id="TIGR01924">
    <property type="entry name" value="rsbW_low_gc"/>
    <property type="match status" value="1"/>
</dbReference>
<dbReference type="PANTHER" id="PTHR35526">
    <property type="entry name" value="ANTI-SIGMA-F FACTOR RSBW-RELATED"/>
    <property type="match status" value="1"/>
</dbReference>
<dbReference type="PANTHER" id="PTHR35526:SF9">
    <property type="entry name" value="SERINE-PROTEIN KINASE RSBW"/>
    <property type="match status" value="1"/>
</dbReference>
<dbReference type="Pfam" id="PF13581">
    <property type="entry name" value="HATPase_c_2"/>
    <property type="match status" value="1"/>
</dbReference>
<dbReference type="SUPFAM" id="SSF55874">
    <property type="entry name" value="ATPase domain of HSP90 chaperone/DNA topoisomerase II/histidine kinase"/>
    <property type="match status" value="1"/>
</dbReference>
<organism>
    <name type="scientific">Staphylococcus aureus (strain JH9)</name>
    <dbReference type="NCBI Taxonomy" id="359786"/>
    <lineage>
        <taxon>Bacteria</taxon>
        <taxon>Bacillati</taxon>
        <taxon>Bacillota</taxon>
        <taxon>Bacilli</taxon>
        <taxon>Bacillales</taxon>
        <taxon>Staphylococcaceae</taxon>
        <taxon>Staphylococcus</taxon>
    </lineage>
</organism>